<sequence>MDRSFASEIQARIDNKTKPLGALGLLEKVALELALIQSQDKLQSVETIEIRKPTMLVFAGDHGIAKEGVSIAPSAVTQQMVANFLAGGAAINCFCDLNQIDFKVVDCGMLSPIDTLVPDFKHHPNLIERRLGNGTANFAKQTAMSLEQVALGLEYGAKVAQQAILNGSNLLMFGEMGIGNTSSASALLTALSLLEVDHCVGYGTGITQEQLNRKIKLVAQGVNRCHDLDTKGALAQVGGFEIVQMVGAFLEAKRHKTPVLVDGFIVSVAAYVATLLDEETRDYMLFAHNSEENGHKFVLECLQAEPLLDLGLRLGEGTGAALALPLVKAAAQFYNNMASFESAGVTV</sequence>
<dbReference type="EC" id="2.4.2.21" evidence="1"/>
<dbReference type="EMBL" id="CP000789">
    <property type="protein sequence ID" value="ABU71091.1"/>
    <property type="molecule type" value="Genomic_DNA"/>
</dbReference>
<dbReference type="RefSeq" id="WP_012127849.1">
    <property type="nucleotide sequence ID" value="NC_009783.1"/>
</dbReference>
<dbReference type="SMR" id="A7MVW6"/>
<dbReference type="KEGG" id="vha:VIBHAR_02126"/>
<dbReference type="PATRIC" id="fig|338187.25.peg.566"/>
<dbReference type="UniPathway" id="UPA00061">
    <property type="reaction ID" value="UER00516"/>
</dbReference>
<dbReference type="Proteomes" id="UP000008152">
    <property type="component" value="Chromosome I"/>
</dbReference>
<dbReference type="GO" id="GO:0008939">
    <property type="term" value="F:nicotinate-nucleotide-dimethylbenzimidazole phosphoribosyltransferase activity"/>
    <property type="evidence" value="ECO:0007669"/>
    <property type="project" value="UniProtKB-UniRule"/>
</dbReference>
<dbReference type="GO" id="GO:0009236">
    <property type="term" value="P:cobalamin biosynthetic process"/>
    <property type="evidence" value="ECO:0007669"/>
    <property type="project" value="UniProtKB-KW"/>
</dbReference>
<dbReference type="CDD" id="cd02439">
    <property type="entry name" value="DMB-PRT_CobT"/>
    <property type="match status" value="1"/>
</dbReference>
<dbReference type="FunFam" id="3.40.50.10210:FF:000001">
    <property type="entry name" value="Nicotinate-nucleotide--dimethylbenzimidazole phosphoribosyltransferase"/>
    <property type="match status" value="1"/>
</dbReference>
<dbReference type="Gene3D" id="1.10.1610.10">
    <property type="match status" value="1"/>
</dbReference>
<dbReference type="Gene3D" id="3.40.50.10210">
    <property type="match status" value="1"/>
</dbReference>
<dbReference type="HAMAP" id="MF_00230">
    <property type="entry name" value="CobT"/>
    <property type="match status" value="1"/>
</dbReference>
<dbReference type="InterPro" id="IPR003200">
    <property type="entry name" value="Nict_dMeBzImd_PRibTrfase"/>
</dbReference>
<dbReference type="InterPro" id="IPR017846">
    <property type="entry name" value="Nict_dMeBzImd_PRibTrfase_bact"/>
</dbReference>
<dbReference type="InterPro" id="IPR023195">
    <property type="entry name" value="Nict_dMeBzImd_PRibTrfase_N"/>
</dbReference>
<dbReference type="InterPro" id="IPR036087">
    <property type="entry name" value="Nict_dMeBzImd_PRibTrfase_sf"/>
</dbReference>
<dbReference type="NCBIfam" id="TIGR03160">
    <property type="entry name" value="cobT_DBIPRT"/>
    <property type="match status" value="1"/>
</dbReference>
<dbReference type="NCBIfam" id="NF000996">
    <property type="entry name" value="PRK00105.1"/>
    <property type="match status" value="1"/>
</dbReference>
<dbReference type="PANTHER" id="PTHR43463">
    <property type="entry name" value="NICOTINATE-NUCLEOTIDE--DIMETHYLBENZIMIDAZOLE PHOSPHORIBOSYLTRANSFERASE"/>
    <property type="match status" value="1"/>
</dbReference>
<dbReference type="PANTHER" id="PTHR43463:SF1">
    <property type="entry name" value="NICOTINATE-NUCLEOTIDE--DIMETHYLBENZIMIDAZOLE PHOSPHORIBOSYLTRANSFERASE"/>
    <property type="match status" value="1"/>
</dbReference>
<dbReference type="Pfam" id="PF02277">
    <property type="entry name" value="DBI_PRT"/>
    <property type="match status" value="1"/>
</dbReference>
<dbReference type="SUPFAM" id="SSF52733">
    <property type="entry name" value="Nicotinate mononucleotide:5,6-dimethylbenzimidazole phosphoribosyltransferase (CobT)"/>
    <property type="match status" value="1"/>
</dbReference>
<feature type="chain" id="PRO_1000021639" description="Nicotinate-nucleotide--dimethylbenzimidazole phosphoribosyltransferase">
    <location>
        <begin position="1"/>
        <end position="347"/>
    </location>
</feature>
<feature type="active site" description="Proton acceptor" evidence="1">
    <location>
        <position position="316"/>
    </location>
</feature>
<comment type="function">
    <text evidence="1">Catalyzes the synthesis of alpha-ribazole-5'-phosphate from nicotinate mononucleotide (NAMN) and 5,6-dimethylbenzimidazole (DMB).</text>
</comment>
<comment type="catalytic activity">
    <reaction evidence="1">
        <text>5,6-dimethylbenzimidazole + nicotinate beta-D-ribonucleotide = alpha-ribazole 5'-phosphate + nicotinate + H(+)</text>
        <dbReference type="Rhea" id="RHEA:11196"/>
        <dbReference type="ChEBI" id="CHEBI:15378"/>
        <dbReference type="ChEBI" id="CHEBI:15890"/>
        <dbReference type="ChEBI" id="CHEBI:32544"/>
        <dbReference type="ChEBI" id="CHEBI:57502"/>
        <dbReference type="ChEBI" id="CHEBI:57918"/>
        <dbReference type="EC" id="2.4.2.21"/>
    </reaction>
</comment>
<comment type="pathway">
    <text evidence="1">Nucleoside biosynthesis; alpha-ribazole biosynthesis; alpha-ribazole from 5,6-dimethylbenzimidazole: step 1/2.</text>
</comment>
<comment type="similarity">
    <text evidence="1">Belongs to the CobT family.</text>
</comment>
<gene>
    <name evidence="1" type="primary">cobT</name>
    <name type="ordered locus">VIBHAR_02126</name>
</gene>
<organism>
    <name type="scientific">Vibrio campbellii (strain ATCC BAA-1116)</name>
    <dbReference type="NCBI Taxonomy" id="2902295"/>
    <lineage>
        <taxon>Bacteria</taxon>
        <taxon>Pseudomonadati</taxon>
        <taxon>Pseudomonadota</taxon>
        <taxon>Gammaproteobacteria</taxon>
        <taxon>Vibrionales</taxon>
        <taxon>Vibrionaceae</taxon>
        <taxon>Vibrio</taxon>
    </lineage>
</organism>
<protein>
    <recommendedName>
        <fullName evidence="1">Nicotinate-nucleotide--dimethylbenzimidazole phosphoribosyltransferase</fullName>
        <shortName evidence="1">NN:DBI PRT</shortName>
        <ecNumber evidence="1">2.4.2.21</ecNumber>
    </recommendedName>
    <alternativeName>
        <fullName evidence="1">N(1)-alpha-phosphoribosyltransferase</fullName>
    </alternativeName>
</protein>
<evidence type="ECO:0000255" key="1">
    <source>
        <dbReference type="HAMAP-Rule" id="MF_00230"/>
    </source>
</evidence>
<proteinExistence type="inferred from homology"/>
<reference key="1">
    <citation type="submission" date="2007-08" db="EMBL/GenBank/DDBJ databases">
        <authorList>
            <consortium name="The Vibrio harveyi Genome Sequencing Project"/>
            <person name="Bassler B."/>
            <person name="Clifton S.W."/>
            <person name="Fulton L."/>
            <person name="Delehaunty K."/>
            <person name="Fronick C."/>
            <person name="Harrison M."/>
            <person name="Markivic C."/>
            <person name="Fulton R."/>
            <person name="Tin-Wollam A.-M."/>
            <person name="Shah N."/>
            <person name="Pepin K."/>
            <person name="Nash W."/>
            <person name="Thiruvilangam P."/>
            <person name="Bhonagiri V."/>
            <person name="Waters C."/>
            <person name="Tu K.C."/>
            <person name="Irgon J."/>
            <person name="Wilson R.K."/>
        </authorList>
    </citation>
    <scope>NUCLEOTIDE SEQUENCE [LARGE SCALE GENOMIC DNA]</scope>
    <source>
        <strain>ATCC BAA-1116 / BB120</strain>
    </source>
</reference>
<name>COBT_VIBC1</name>
<keyword id="KW-0169">Cobalamin biosynthesis</keyword>
<keyword id="KW-0328">Glycosyltransferase</keyword>
<keyword id="KW-0808">Transferase</keyword>
<accession>A7MVW6</accession>